<dbReference type="EC" id="2.7.1.71" evidence="1"/>
<dbReference type="EMBL" id="CP000100">
    <property type="protein sequence ID" value="ABB56924.1"/>
    <property type="molecule type" value="Genomic_DNA"/>
</dbReference>
<dbReference type="RefSeq" id="WP_011242958.1">
    <property type="nucleotide sequence ID" value="NZ_JACJTX010000003.1"/>
</dbReference>
<dbReference type="SMR" id="Q31PU5"/>
<dbReference type="STRING" id="1140.Synpcc7942_0894"/>
<dbReference type="PaxDb" id="1140-Synpcc7942_0894"/>
<dbReference type="KEGG" id="syf:Synpcc7942_0894"/>
<dbReference type="eggNOG" id="COG0703">
    <property type="taxonomic scope" value="Bacteria"/>
</dbReference>
<dbReference type="HOGENOM" id="CLU_057607_2_3_3"/>
<dbReference type="OrthoDB" id="9800332at2"/>
<dbReference type="BioCyc" id="SYNEL:SYNPCC7942_0894-MONOMER"/>
<dbReference type="UniPathway" id="UPA00053">
    <property type="reaction ID" value="UER00088"/>
</dbReference>
<dbReference type="Proteomes" id="UP000889800">
    <property type="component" value="Chromosome"/>
</dbReference>
<dbReference type="GO" id="GO:0005829">
    <property type="term" value="C:cytosol"/>
    <property type="evidence" value="ECO:0007669"/>
    <property type="project" value="TreeGrafter"/>
</dbReference>
<dbReference type="GO" id="GO:0005524">
    <property type="term" value="F:ATP binding"/>
    <property type="evidence" value="ECO:0007669"/>
    <property type="project" value="UniProtKB-UniRule"/>
</dbReference>
<dbReference type="GO" id="GO:0000287">
    <property type="term" value="F:magnesium ion binding"/>
    <property type="evidence" value="ECO:0007669"/>
    <property type="project" value="UniProtKB-UniRule"/>
</dbReference>
<dbReference type="GO" id="GO:0004765">
    <property type="term" value="F:shikimate kinase activity"/>
    <property type="evidence" value="ECO:0007669"/>
    <property type="project" value="UniProtKB-UniRule"/>
</dbReference>
<dbReference type="GO" id="GO:0008652">
    <property type="term" value="P:amino acid biosynthetic process"/>
    <property type="evidence" value="ECO:0007669"/>
    <property type="project" value="UniProtKB-KW"/>
</dbReference>
<dbReference type="GO" id="GO:0009073">
    <property type="term" value="P:aromatic amino acid family biosynthetic process"/>
    <property type="evidence" value="ECO:0007669"/>
    <property type="project" value="UniProtKB-KW"/>
</dbReference>
<dbReference type="GO" id="GO:0009423">
    <property type="term" value="P:chorismate biosynthetic process"/>
    <property type="evidence" value="ECO:0007669"/>
    <property type="project" value="UniProtKB-UniRule"/>
</dbReference>
<dbReference type="CDD" id="cd00464">
    <property type="entry name" value="SK"/>
    <property type="match status" value="1"/>
</dbReference>
<dbReference type="Gene3D" id="3.40.50.300">
    <property type="entry name" value="P-loop containing nucleotide triphosphate hydrolases"/>
    <property type="match status" value="1"/>
</dbReference>
<dbReference type="HAMAP" id="MF_00109">
    <property type="entry name" value="Shikimate_kinase"/>
    <property type="match status" value="1"/>
</dbReference>
<dbReference type="InterPro" id="IPR027417">
    <property type="entry name" value="P-loop_NTPase"/>
</dbReference>
<dbReference type="InterPro" id="IPR031322">
    <property type="entry name" value="Shikimate/glucono_kinase"/>
</dbReference>
<dbReference type="InterPro" id="IPR000623">
    <property type="entry name" value="Shikimate_kinase/TSH1"/>
</dbReference>
<dbReference type="InterPro" id="IPR023000">
    <property type="entry name" value="Shikimate_kinase_CS"/>
</dbReference>
<dbReference type="PANTHER" id="PTHR21087">
    <property type="entry name" value="SHIKIMATE KINASE"/>
    <property type="match status" value="1"/>
</dbReference>
<dbReference type="PANTHER" id="PTHR21087:SF16">
    <property type="entry name" value="SHIKIMATE KINASE 1, CHLOROPLASTIC"/>
    <property type="match status" value="1"/>
</dbReference>
<dbReference type="Pfam" id="PF01202">
    <property type="entry name" value="SKI"/>
    <property type="match status" value="1"/>
</dbReference>
<dbReference type="PRINTS" id="PR01100">
    <property type="entry name" value="SHIKIMTKNASE"/>
</dbReference>
<dbReference type="SUPFAM" id="SSF52540">
    <property type="entry name" value="P-loop containing nucleoside triphosphate hydrolases"/>
    <property type="match status" value="1"/>
</dbReference>
<dbReference type="PROSITE" id="PS01128">
    <property type="entry name" value="SHIKIMATE_KINASE"/>
    <property type="match status" value="1"/>
</dbReference>
<organism>
    <name type="scientific">Synechococcus elongatus (strain ATCC 33912 / PCC 7942 / FACHB-805)</name>
    <name type="common">Anacystis nidulans R2</name>
    <dbReference type="NCBI Taxonomy" id="1140"/>
    <lineage>
        <taxon>Bacteria</taxon>
        <taxon>Bacillati</taxon>
        <taxon>Cyanobacteriota</taxon>
        <taxon>Cyanophyceae</taxon>
        <taxon>Synechococcales</taxon>
        <taxon>Synechococcaceae</taxon>
        <taxon>Synechococcus</taxon>
    </lineage>
</organism>
<name>AROK_SYNE7</name>
<evidence type="ECO:0000255" key="1">
    <source>
        <dbReference type="HAMAP-Rule" id="MF_00109"/>
    </source>
</evidence>
<protein>
    <recommendedName>
        <fullName evidence="1">Shikimate kinase</fullName>
        <shortName evidence="1">SK</shortName>
        <ecNumber evidence="1">2.7.1.71</ecNumber>
    </recommendedName>
</protein>
<reference key="1">
    <citation type="submission" date="2005-08" db="EMBL/GenBank/DDBJ databases">
        <title>Complete sequence of chromosome 1 of Synechococcus elongatus PCC 7942.</title>
        <authorList>
            <consortium name="US DOE Joint Genome Institute"/>
            <person name="Copeland A."/>
            <person name="Lucas S."/>
            <person name="Lapidus A."/>
            <person name="Barry K."/>
            <person name="Detter J.C."/>
            <person name="Glavina T."/>
            <person name="Hammon N."/>
            <person name="Israni S."/>
            <person name="Pitluck S."/>
            <person name="Schmutz J."/>
            <person name="Larimer F."/>
            <person name="Land M."/>
            <person name="Kyrpides N."/>
            <person name="Lykidis A."/>
            <person name="Golden S."/>
            <person name="Richardson P."/>
        </authorList>
    </citation>
    <scope>NUCLEOTIDE SEQUENCE [LARGE SCALE GENOMIC DNA]</scope>
    <source>
        <strain>ATCC 33912 / PCC 7942 / FACHB-805</strain>
    </source>
</reference>
<proteinExistence type="inferred from homology"/>
<gene>
    <name evidence="1" type="primary">aroK</name>
    <name type="ordered locus">Synpcc7942_0894</name>
</gene>
<accession>Q31PU5</accession>
<keyword id="KW-0028">Amino-acid biosynthesis</keyword>
<keyword id="KW-0057">Aromatic amino acid biosynthesis</keyword>
<keyword id="KW-0067">ATP-binding</keyword>
<keyword id="KW-0963">Cytoplasm</keyword>
<keyword id="KW-0418">Kinase</keyword>
<keyword id="KW-0460">Magnesium</keyword>
<keyword id="KW-0479">Metal-binding</keyword>
<keyword id="KW-0547">Nucleotide-binding</keyword>
<keyword id="KW-1185">Reference proteome</keyword>
<keyword id="KW-0808">Transferase</keyword>
<comment type="function">
    <text evidence="1">Catalyzes the specific phosphorylation of the 3-hydroxyl group of shikimic acid using ATP as a cosubstrate.</text>
</comment>
<comment type="catalytic activity">
    <reaction evidence="1">
        <text>shikimate + ATP = 3-phosphoshikimate + ADP + H(+)</text>
        <dbReference type="Rhea" id="RHEA:13121"/>
        <dbReference type="ChEBI" id="CHEBI:15378"/>
        <dbReference type="ChEBI" id="CHEBI:30616"/>
        <dbReference type="ChEBI" id="CHEBI:36208"/>
        <dbReference type="ChEBI" id="CHEBI:145989"/>
        <dbReference type="ChEBI" id="CHEBI:456216"/>
        <dbReference type="EC" id="2.7.1.71"/>
    </reaction>
</comment>
<comment type="cofactor">
    <cofactor evidence="1">
        <name>Mg(2+)</name>
        <dbReference type="ChEBI" id="CHEBI:18420"/>
    </cofactor>
    <text evidence="1">Binds 1 Mg(2+) ion per subunit.</text>
</comment>
<comment type="pathway">
    <text evidence="1">Metabolic intermediate biosynthesis; chorismate biosynthesis; chorismate from D-erythrose 4-phosphate and phosphoenolpyruvate: step 5/7.</text>
</comment>
<comment type="subunit">
    <text evidence="1">Monomer.</text>
</comment>
<comment type="subcellular location">
    <subcellularLocation>
        <location evidence="1">Cytoplasm</location>
    </subcellularLocation>
</comment>
<comment type="similarity">
    <text evidence="1">Belongs to the shikimate kinase family.</text>
</comment>
<feature type="chain" id="PRO_0000237947" description="Shikimate kinase">
    <location>
        <begin position="1"/>
        <end position="190"/>
    </location>
</feature>
<feature type="binding site" evidence="1">
    <location>
        <begin position="19"/>
        <end position="24"/>
    </location>
    <ligand>
        <name>ATP</name>
        <dbReference type="ChEBI" id="CHEBI:30616"/>
    </ligand>
</feature>
<feature type="binding site" evidence="1">
    <location>
        <position position="23"/>
    </location>
    <ligand>
        <name>Mg(2+)</name>
        <dbReference type="ChEBI" id="CHEBI:18420"/>
    </ligand>
</feature>
<feature type="binding site" evidence="1">
    <location>
        <position position="41"/>
    </location>
    <ligand>
        <name>substrate</name>
    </ligand>
</feature>
<feature type="binding site" evidence="1">
    <location>
        <position position="65"/>
    </location>
    <ligand>
        <name>substrate</name>
    </ligand>
</feature>
<feature type="binding site" evidence="1">
    <location>
        <position position="87"/>
    </location>
    <ligand>
        <name>substrate</name>
    </ligand>
</feature>
<feature type="binding site" evidence="1">
    <location>
        <position position="124"/>
    </location>
    <ligand>
        <name>ATP</name>
        <dbReference type="ChEBI" id="CHEBI:30616"/>
    </ligand>
</feature>
<feature type="binding site" evidence="1">
    <location>
        <position position="143"/>
    </location>
    <ligand>
        <name>substrate</name>
    </ligand>
</feature>
<sequence>MSLVTALNGLDLFLVGLMGSGKTTIGKLLAESLGYTYVDTDSLIENVTGRSIPEIFASDGEAGFRQIETQVLEEVASYRRLVVATGGGIVIRPENWSYLQQGLVIWLDVPIPELLRRLEGDQNRPLLQTEAPATTLQALWEQRRDRYAQADLRIAIEASEDPEVTMQRILEVIPSVLKNSADSSPAEIET</sequence>